<keyword id="KW-1185">Reference proteome</keyword>
<keyword id="KW-0687">Ribonucleoprotein</keyword>
<keyword id="KW-0689">Ribosomal protein</keyword>
<gene>
    <name evidence="1" type="primary">rpsI</name>
    <name type="ordered locus">Oant_2496</name>
</gene>
<dbReference type="EMBL" id="CP000758">
    <property type="protein sequence ID" value="ABS15209.1"/>
    <property type="molecule type" value="Genomic_DNA"/>
</dbReference>
<dbReference type="RefSeq" id="WP_006466519.1">
    <property type="nucleotide sequence ID" value="NC_009667.1"/>
</dbReference>
<dbReference type="SMR" id="A6X1V5"/>
<dbReference type="STRING" id="439375.Oant_2496"/>
<dbReference type="GeneID" id="61317065"/>
<dbReference type="KEGG" id="oan:Oant_2496"/>
<dbReference type="eggNOG" id="COG0103">
    <property type="taxonomic scope" value="Bacteria"/>
</dbReference>
<dbReference type="HOGENOM" id="CLU_046483_2_0_5"/>
<dbReference type="PhylomeDB" id="A6X1V5"/>
<dbReference type="Proteomes" id="UP000002301">
    <property type="component" value="Chromosome 1"/>
</dbReference>
<dbReference type="GO" id="GO:0022627">
    <property type="term" value="C:cytosolic small ribosomal subunit"/>
    <property type="evidence" value="ECO:0007669"/>
    <property type="project" value="TreeGrafter"/>
</dbReference>
<dbReference type="GO" id="GO:0003723">
    <property type="term" value="F:RNA binding"/>
    <property type="evidence" value="ECO:0007669"/>
    <property type="project" value="TreeGrafter"/>
</dbReference>
<dbReference type="GO" id="GO:0003735">
    <property type="term" value="F:structural constituent of ribosome"/>
    <property type="evidence" value="ECO:0007669"/>
    <property type="project" value="InterPro"/>
</dbReference>
<dbReference type="GO" id="GO:0006412">
    <property type="term" value="P:translation"/>
    <property type="evidence" value="ECO:0007669"/>
    <property type="project" value="UniProtKB-UniRule"/>
</dbReference>
<dbReference type="FunFam" id="3.30.230.10:FF:000034">
    <property type="entry name" value="30S ribosomal protein S9"/>
    <property type="match status" value="1"/>
</dbReference>
<dbReference type="Gene3D" id="3.30.230.10">
    <property type="match status" value="1"/>
</dbReference>
<dbReference type="HAMAP" id="MF_00532_B">
    <property type="entry name" value="Ribosomal_uS9_B"/>
    <property type="match status" value="1"/>
</dbReference>
<dbReference type="InterPro" id="IPR020568">
    <property type="entry name" value="Ribosomal_Su5_D2-typ_SF"/>
</dbReference>
<dbReference type="InterPro" id="IPR000754">
    <property type="entry name" value="Ribosomal_uS9"/>
</dbReference>
<dbReference type="InterPro" id="IPR023035">
    <property type="entry name" value="Ribosomal_uS9_bac/plastid"/>
</dbReference>
<dbReference type="InterPro" id="IPR020574">
    <property type="entry name" value="Ribosomal_uS9_CS"/>
</dbReference>
<dbReference type="InterPro" id="IPR014721">
    <property type="entry name" value="Ribsml_uS5_D2-typ_fold_subgr"/>
</dbReference>
<dbReference type="NCBIfam" id="NF001099">
    <property type="entry name" value="PRK00132.1"/>
    <property type="match status" value="1"/>
</dbReference>
<dbReference type="PANTHER" id="PTHR21569">
    <property type="entry name" value="RIBOSOMAL PROTEIN S9"/>
    <property type="match status" value="1"/>
</dbReference>
<dbReference type="PANTHER" id="PTHR21569:SF1">
    <property type="entry name" value="SMALL RIBOSOMAL SUBUNIT PROTEIN US9M"/>
    <property type="match status" value="1"/>
</dbReference>
<dbReference type="Pfam" id="PF00380">
    <property type="entry name" value="Ribosomal_S9"/>
    <property type="match status" value="1"/>
</dbReference>
<dbReference type="SUPFAM" id="SSF54211">
    <property type="entry name" value="Ribosomal protein S5 domain 2-like"/>
    <property type="match status" value="1"/>
</dbReference>
<dbReference type="PROSITE" id="PS00360">
    <property type="entry name" value="RIBOSOMAL_S9"/>
    <property type="match status" value="1"/>
</dbReference>
<feature type="chain" id="PRO_1000051274" description="Small ribosomal subunit protein uS9">
    <location>
        <begin position="1"/>
        <end position="158"/>
    </location>
</feature>
<sequence length="158" mass="17262">MAEQLNSLEELGTVAKTEAAAPVHVQKLDAQGRAYATGKRKDAVARVWVKPGTGKITVNDKEFEKYFARPVLQMILQQPIVASNRAGQFDIVATVAGGGLSGQAGAVRHGISKALTYYEPGLRTVLKKGGFLTRDSRVVERKKYGKAKARRSFQFSKR</sequence>
<organism>
    <name type="scientific">Brucella anthropi (strain ATCC 49188 / DSM 6882 / CCUG 24695 / JCM 21032 / LMG 3331 / NBRC 15819 / NCTC 12168 / Alc 37)</name>
    <name type="common">Ochrobactrum anthropi</name>
    <dbReference type="NCBI Taxonomy" id="439375"/>
    <lineage>
        <taxon>Bacteria</taxon>
        <taxon>Pseudomonadati</taxon>
        <taxon>Pseudomonadota</taxon>
        <taxon>Alphaproteobacteria</taxon>
        <taxon>Hyphomicrobiales</taxon>
        <taxon>Brucellaceae</taxon>
        <taxon>Brucella/Ochrobactrum group</taxon>
        <taxon>Brucella</taxon>
    </lineage>
</organism>
<evidence type="ECO:0000255" key="1">
    <source>
        <dbReference type="HAMAP-Rule" id="MF_00532"/>
    </source>
</evidence>
<evidence type="ECO:0000305" key="2"/>
<name>RS9_BRUA4</name>
<comment type="similarity">
    <text evidence="1">Belongs to the universal ribosomal protein uS9 family.</text>
</comment>
<accession>A6X1V5</accession>
<protein>
    <recommendedName>
        <fullName evidence="1">Small ribosomal subunit protein uS9</fullName>
    </recommendedName>
    <alternativeName>
        <fullName evidence="2">30S ribosomal protein S9</fullName>
    </alternativeName>
</protein>
<proteinExistence type="inferred from homology"/>
<reference key="1">
    <citation type="journal article" date="2011" name="J. Bacteriol.">
        <title>Genome of Ochrobactrum anthropi ATCC 49188 T, a versatile opportunistic pathogen and symbiont of several eukaryotic hosts.</title>
        <authorList>
            <person name="Chain P.S."/>
            <person name="Lang D.M."/>
            <person name="Comerci D.J."/>
            <person name="Malfatti S.A."/>
            <person name="Vergez L.M."/>
            <person name="Shin M."/>
            <person name="Ugalde R.A."/>
            <person name="Garcia E."/>
            <person name="Tolmasky M.E."/>
        </authorList>
    </citation>
    <scope>NUCLEOTIDE SEQUENCE [LARGE SCALE GENOMIC DNA]</scope>
    <source>
        <strain>ATCC 49188 / DSM 6882 / CCUG 24695 / JCM 21032 / LMG 3331 / NBRC 15819 / NCTC 12168 / Alc 37</strain>
    </source>
</reference>